<proteinExistence type="inferred from homology"/>
<comment type="function">
    <text evidence="1">Involved in the import of serine and threonine into the cell, with the concomitant import of sodium (symport system).</text>
</comment>
<comment type="catalytic activity">
    <reaction evidence="1">
        <text>L-serine(in) + Na(+)(in) = L-serine(out) + Na(+)(out)</text>
        <dbReference type="Rhea" id="RHEA:29575"/>
        <dbReference type="ChEBI" id="CHEBI:29101"/>
        <dbReference type="ChEBI" id="CHEBI:33384"/>
    </reaction>
    <physiologicalReaction direction="right-to-left" evidence="1">
        <dbReference type="Rhea" id="RHEA:29577"/>
    </physiologicalReaction>
</comment>
<comment type="catalytic activity">
    <reaction evidence="1">
        <text>L-threonine(in) + Na(+)(in) = L-threonine(out) + Na(+)(out)</text>
        <dbReference type="Rhea" id="RHEA:69999"/>
        <dbReference type="ChEBI" id="CHEBI:29101"/>
        <dbReference type="ChEBI" id="CHEBI:57926"/>
    </reaction>
    <physiologicalReaction direction="right-to-left" evidence="1">
        <dbReference type="Rhea" id="RHEA:70001"/>
    </physiologicalReaction>
</comment>
<comment type="subcellular location">
    <subcellularLocation>
        <location evidence="1">Cell inner membrane</location>
        <topology evidence="1">Multi-pass membrane protein</topology>
    </subcellularLocation>
</comment>
<comment type="similarity">
    <text evidence="1">Belongs to the dicarboxylate/amino acid:cation symporter (DAACS) (TC 2.A.23) family.</text>
</comment>
<protein>
    <recommendedName>
        <fullName evidence="1">Serine/threonine transporter SstT</fullName>
    </recommendedName>
    <alternativeName>
        <fullName evidence="1">Na(+)/serine-threonine symporter</fullName>
    </alternativeName>
</protein>
<gene>
    <name evidence="1" type="primary">sstT</name>
    <name type="ordered locus">PsycPRwf_0051</name>
</gene>
<dbReference type="EMBL" id="CP000713">
    <property type="protein sequence ID" value="ABQ93011.1"/>
    <property type="molecule type" value="Genomic_DNA"/>
</dbReference>
<dbReference type="SMR" id="A5WBH0"/>
<dbReference type="KEGG" id="prw:PsycPRwf_0051"/>
<dbReference type="eggNOG" id="COG3633">
    <property type="taxonomic scope" value="Bacteria"/>
</dbReference>
<dbReference type="HOGENOM" id="CLU_044581_0_0_6"/>
<dbReference type="GO" id="GO:0005886">
    <property type="term" value="C:plasma membrane"/>
    <property type="evidence" value="ECO:0007669"/>
    <property type="project" value="UniProtKB-SubCell"/>
</dbReference>
<dbReference type="GO" id="GO:0005295">
    <property type="term" value="F:neutral L-amino acid:sodium symporter activity"/>
    <property type="evidence" value="ECO:0007669"/>
    <property type="project" value="TreeGrafter"/>
</dbReference>
<dbReference type="GO" id="GO:0032329">
    <property type="term" value="P:serine transport"/>
    <property type="evidence" value="ECO:0007669"/>
    <property type="project" value="InterPro"/>
</dbReference>
<dbReference type="GO" id="GO:0015826">
    <property type="term" value="P:threonine transport"/>
    <property type="evidence" value="ECO:0007669"/>
    <property type="project" value="InterPro"/>
</dbReference>
<dbReference type="FunFam" id="1.10.3860.10:FF:000003">
    <property type="entry name" value="Serine/threonine transporter sstT"/>
    <property type="match status" value="1"/>
</dbReference>
<dbReference type="Gene3D" id="1.10.3860.10">
    <property type="entry name" value="Sodium:dicarboxylate symporter"/>
    <property type="match status" value="1"/>
</dbReference>
<dbReference type="HAMAP" id="MF_01582">
    <property type="entry name" value="Ser_Thr_transp_SstT"/>
    <property type="match status" value="1"/>
</dbReference>
<dbReference type="InterPro" id="IPR001991">
    <property type="entry name" value="Na-dicarboxylate_symporter"/>
</dbReference>
<dbReference type="InterPro" id="IPR036458">
    <property type="entry name" value="Na:dicarbo_symporter_sf"/>
</dbReference>
<dbReference type="InterPro" id="IPR023025">
    <property type="entry name" value="Ser_Thr_transp_SstT"/>
</dbReference>
<dbReference type="NCBIfam" id="NF010151">
    <property type="entry name" value="PRK13628.1"/>
    <property type="match status" value="1"/>
</dbReference>
<dbReference type="PANTHER" id="PTHR42865">
    <property type="entry name" value="PROTON/GLUTAMATE-ASPARTATE SYMPORTER"/>
    <property type="match status" value="1"/>
</dbReference>
<dbReference type="PANTHER" id="PTHR42865:SF8">
    <property type="entry name" value="SERINE_THREONINE TRANSPORTER SSTT"/>
    <property type="match status" value="1"/>
</dbReference>
<dbReference type="Pfam" id="PF00375">
    <property type="entry name" value="SDF"/>
    <property type="match status" value="1"/>
</dbReference>
<dbReference type="PRINTS" id="PR00173">
    <property type="entry name" value="EDTRNSPORT"/>
</dbReference>
<dbReference type="SUPFAM" id="SSF118215">
    <property type="entry name" value="Proton glutamate symport protein"/>
    <property type="match status" value="1"/>
</dbReference>
<accession>A5WBH0</accession>
<feature type="chain" id="PRO_1000073613" description="Serine/threonine transporter SstT">
    <location>
        <begin position="1"/>
        <end position="406"/>
    </location>
</feature>
<feature type="transmembrane region" description="Helical" evidence="1">
    <location>
        <begin position="11"/>
        <end position="31"/>
    </location>
</feature>
<feature type="transmembrane region" description="Helical" evidence="1">
    <location>
        <begin position="45"/>
        <end position="65"/>
    </location>
</feature>
<feature type="transmembrane region" description="Helical" evidence="1">
    <location>
        <begin position="79"/>
        <end position="99"/>
    </location>
</feature>
<feature type="transmembrane region" description="Helical" evidence="1">
    <location>
        <begin position="141"/>
        <end position="161"/>
    </location>
</feature>
<feature type="transmembrane region" description="Helical" evidence="1">
    <location>
        <begin position="185"/>
        <end position="205"/>
    </location>
</feature>
<feature type="transmembrane region" description="Helical" evidence="1">
    <location>
        <begin position="216"/>
        <end position="236"/>
    </location>
</feature>
<feature type="transmembrane region" description="Helical" evidence="1">
    <location>
        <begin position="298"/>
        <end position="318"/>
    </location>
</feature>
<feature type="transmembrane region" description="Helical" evidence="1">
    <location>
        <begin position="330"/>
        <end position="350"/>
    </location>
</feature>
<feature type="transmembrane region" description="Helical" evidence="1">
    <location>
        <begin position="357"/>
        <end position="377"/>
    </location>
</feature>
<sequence length="406" mass="42237">MRALIDMYQRIGLVPLIIVGLVLGILIGWLMPSVGVALGLLGSLFVGALKAVAPILVFILVMAAISQHQGESQVHVRPVLIMYIFGTFLAALTAVVASFAFPTELLGLNTIEAVADQAPPSGLKEVLTTLLMNLVDNPVNAIANANYMGILAWALIIGLALRKASATTRTMVSDLSEAISNVVRFVIAFAPIGILGLVANTIAETGFSALMSYGRLLTILVGCMLFIALVVNPIIVAFNIRRNPYPLVFTCLRESGITAFFTRSSAANIPVNMNLAKKLGLHEDTYSVTLPLGATINMAGAAITINVLTLAAAHTLGVPVDFGSALLLSVVATVAACGASGVAGGSLLLIPLACSLFNIPNDIAMQVVAIGFIIGVVQDSAETALNSSTDVLFTAAADPIMKNKTA</sequence>
<organism>
    <name type="scientific">Psychrobacter sp. (strain PRwf-1)</name>
    <dbReference type="NCBI Taxonomy" id="349106"/>
    <lineage>
        <taxon>Bacteria</taxon>
        <taxon>Pseudomonadati</taxon>
        <taxon>Pseudomonadota</taxon>
        <taxon>Gammaproteobacteria</taxon>
        <taxon>Moraxellales</taxon>
        <taxon>Moraxellaceae</taxon>
        <taxon>Psychrobacter</taxon>
    </lineage>
</organism>
<reference key="1">
    <citation type="submission" date="2007-05" db="EMBL/GenBank/DDBJ databases">
        <title>Complete sequence of chromosome of Psychrobacter sp. PRwf-1.</title>
        <authorList>
            <consortium name="US DOE Joint Genome Institute"/>
            <person name="Copeland A."/>
            <person name="Lucas S."/>
            <person name="Lapidus A."/>
            <person name="Barry K."/>
            <person name="Detter J.C."/>
            <person name="Glavina del Rio T."/>
            <person name="Hammon N."/>
            <person name="Israni S."/>
            <person name="Dalin E."/>
            <person name="Tice H."/>
            <person name="Pitluck S."/>
            <person name="Chain P."/>
            <person name="Malfatti S."/>
            <person name="Shin M."/>
            <person name="Vergez L."/>
            <person name="Schmutz J."/>
            <person name="Larimer F."/>
            <person name="Land M."/>
            <person name="Hauser L."/>
            <person name="Kyrpides N."/>
            <person name="Kim E."/>
            <person name="Tiedje J."/>
            <person name="Richardson P."/>
        </authorList>
    </citation>
    <scope>NUCLEOTIDE SEQUENCE [LARGE SCALE GENOMIC DNA]</scope>
    <source>
        <strain>PRwf-1</strain>
    </source>
</reference>
<name>SSTT_PSYWF</name>
<keyword id="KW-0029">Amino-acid transport</keyword>
<keyword id="KW-0997">Cell inner membrane</keyword>
<keyword id="KW-1003">Cell membrane</keyword>
<keyword id="KW-0472">Membrane</keyword>
<keyword id="KW-0769">Symport</keyword>
<keyword id="KW-0812">Transmembrane</keyword>
<keyword id="KW-1133">Transmembrane helix</keyword>
<keyword id="KW-0813">Transport</keyword>
<evidence type="ECO:0000255" key="1">
    <source>
        <dbReference type="HAMAP-Rule" id="MF_01582"/>
    </source>
</evidence>